<organism>
    <name type="scientific">Homo sapiens</name>
    <name type="common">Human</name>
    <dbReference type="NCBI Taxonomy" id="9606"/>
    <lineage>
        <taxon>Eukaryota</taxon>
        <taxon>Metazoa</taxon>
        <taxon>Chordata</taxon>
        <taxon>Craniata</taxon>
        <taxon>Vertebrata</taxon>
        <taxon>Euteleostomi</taxon>
        <taxon>Mammalia</taxon>
        <taxon>Eutheria</taxon>
        <taxon>Euarchontoglires</taxon>
        <taxon>Primates</taxon>
        <taxon>Haplorrhini</taxon>
        <taxon>Catarrhini</taxon>
        <taxon>Hominidae</taxon>
        <taxon>Homo</taxon>
    </lineage>
</organism>
<proteinExistence type="evidence at protein level"/>
<dbReference type="EMBL" id="CH471069">
    <property type="protein sequence ID" value="EAW93002.1"/>
    <property type="molecule type" value="Genomic_DNA"/>
</dbReference>
<dbReference type="EMBL" id="BC012029">
    <property type="protein sequence ID" value="AAH12029.1"/>
    <property type="molecule type" value="mRNA"/>
</dbReference>
<dbReference type="EMBL" id="BC127690">
    <property type="protein sequence ID" value="AAI27691.1"/>
    <property type="molecule type" value="mRNA"/>
</dbReference>
<dbReference type="EMBL" id="BC127691">
    <property type="protein sequence ID" value="AAI27692.1"/>
    <property type="molecule type" value="mRNA"/>
</dbReference>
<dbReference type="CCDS" id="CCDS33979.1"/>
<dbReference type="RefSeq" id="NP_001073974.1">
    <property type="nucleotide sequence ID" value="NM_001080505.3"/>
</dbReference>
<dbReference type="SMR" id="A0PJX4"/>
<dbReference type="BioGRID" id="127452">
    <property type="interactions" value="36"/>
</dbReference>
<dbReference type="FunCoup" id="A0PJX4">
    <property type="interactions" value="20"/>
</dbReference>
<dbReference type="IntAct" id="A0PJX4">
    <property type="interactions" value="33"/>
</dbReference>
<dbReference type="STRING" id="9606.ENSP00000326445"/>
<dbReference type="iPTMnet" id="A0PJX4"/>
<dbReference type="PhosphoSitePlus" id="A0PJX4"/>
<dbReference type="BioMuta" id="SHISA3"/>
<dbReference type="MassIVE" id="A0PJX4"/>
<dbReference type="PaxDb" id="9606-ENSP00000326445"/>
<dbReference type="PeptideAtlas" id="A0PJX4"/>
<dbReference type="ProteomicsDB" id="68"/>
<dbReference type="Antibodypedia" id="56214">
    <property type="antibodies" value="65 antibodies from 21 providers"/>
</dbReference>
<dbReference type="DNASU" id="152573"/>
<dbReference type="Ensembl" id="ENST00000319234.5">
    <property type="protein sequence ID" value="ENSP00000326445.4"/>
    <property type="gene ID" value="ENSG00000178343.5"/>
</dbReference>
<dbReference type="GeneID" id="152573"/>
<dbReference type="KEGG" id="hsa:152573"/>
<dbReference type="MANE-Select" id="ENST00000319234.5">
    <property type="protein sequence ID" value="ENSP00000326445.4"/>
    <property type="RefSeq nucleotide sequence ID" value="NM_001080505.3"/>
    <property type="RefSeq protein sequence ID" value="NP_001073974.1"/>
</dbReference>
<dbReference type="UCSC" id="uc003gwp.3">
    <property type="organism name" value="human"/>
</dbReference>
<dbReference type="AGR" id="HGNC:25159"/>
<dbReference type="CTD" id="152573"/>
<dbReference type="DisGeNET" id="152573"/>
<dbReference type="GeneCards" id="SHISA3"/>
<dbReference type="HGNC" id="HGNC:25159">
    <property type="gene designation" value="SHISA3"/>
</dbReference>
<dbReference type="HPA" id="ENSG00000178343">
    <property type="expression patterns" value="Tissue enhanced (heart muscle, kidney)"/>
</dbReference>
<dbReference type="MIM" id="617325">
    <property type="type" value="gene"/>
</dbReference>
<dbReference type="neXtProt" id="NX_A0PJX4"/>
<dbReference type="OpenTargets" id="ENSG00000178343"/>
<dbReference type="PharmGKB" id="PA162403293"/>
<dbReference type="VEuPathDB" id="HostDB:ENSG00000178343"/>
<dbReference type="eggNOG" id="ENOG502RY5T">
    <property type="taxonomic scope" value="Eukaryota"/>
</dbReference>
<dbReference type="GeneTree" id="ENSGT00940000161360"/>
<dbReference type="HOGENOM" id="CLU_085916_1_0_1"/>
<dbReference type="InParanoid" id="A0PJX4"/>
<dbReference type="OMA" id="QGVCTND"/>
<dbReference type="OrthoDB" id="10025410at2759"/>
<dbReference type="PAN-GO" id="A0PJX4">
    <property type="GO annotations" value="0 GO annotations based on evolutionary models"/>
</dbReference>
<dbReference type="PhylomeDB" id="A0PJX4"/>
<dbReference type="TreeFam" id="TF330800"/>
<dbReference type="PathwayCommons" id="A0PJX4"/>
<dbReference type="SignaLink" id="A0PJX4"/>
<dbReference type="BioGRID-ORCS" id="152573">
    <property type="hits" value="8 hits in 1139 CRISPR screens"/>
</dbReference>
<dbReference type="GenomeRNAi" id="152573"/>
<dbReference type="Pharos" id="A0PJX4">
    <property type="development level" value="Tbio"/>
</dbReference>
<dbReference type="PRO" id="PR:A0PJX4"/>
<dbReference type="Proteomes" id="UP000005640">
    <property type="component" value="Chromosome 4"/>
</dbReference>
<dbReference type="RNAct" id="A0PJX4">
    <property type="molecule type" value="protein"/>
</dbReference>
<dbReference type="Bgee" id="ENSG00000178343">
    <property type="expression patterns" value="Expressed in germinal epithelium of ovary and 118 other cell types or tissues"/>
</dbReference>
<dbReference type="GO" id="GO:0005789">
    <property type="term" value="C:endoplasmic reticulum membrane"/>
    <property type="evidence" value="ECO:0007669"/>
    <property type="project" value="UniProtKB-SubCell"/>
</dbReference>
<dbReference type="GO" id="GO:0090090">
    <property type="term" value="P:negative regulation of canonical Wnt signaling pathway"/>
    <property type="evidence" value="ECO:0007669"/>
    <property type="project" value="Ensembl"/>
</dbReference>
<dbReference type="InterPro" id="IPR026910">
    <property type="entry name" value="Shisa"/>
</dbReference>
<dbReference type="InterPro" id="IPR053891">
    <property type="entry name" value="Shisa_N"/>
</dbReference>
<dbReference type="PANTHER" id="PTHR31395:SF4">
    <property type="entry name" value="PROTEIN SHISA-3 HOMOLOG"/>
    <property type="match status" value="1"/>
</dbReference>
<dbReference type="PANTHER" id="PTHR31395">
    <property type="entry name" value="SHISA"/>
    <property type="match status" value="1"/>
</dbReference>
<dbReference type="Pfam" id="PF13908">
    <property type="entry name" value="Shisa_N"/>
    <property type="match status" value="1"/>
</dbReference>
<keyword id="KW-0217">Developmental protein</keyword>
<keyword id="KW-0256">Endoplasmic reticulum</keyword>
<keyword id="KW-0472">Membrane</keyword>
<keyword id="KW-1267">Proteomics identification</keyword>
<keyword id="KW-1185">Reference proteome</keyword>
<keyword id="KW-0732">Signal</keyword>
<keyword id="KW-0812">Transmembrane</keyword>
<keyword id="KW-1133">Transmembrane helix</keyword>
<comment type="function">
    <text evidence="1">Plays an essential role in the maturation of presomitic mesoderm cells by individual attenuation of both FGF and WNT signaling.</text>
</comment>
<comment type="interaction">
    <interactant intactId="EBI-10171518">
        <id>A0PJX4</id>
    </interactant>
    <interactant intactId="EBI-12109402">
        <id>Q86W74-2</id>
        <label>ANKRD46</label>
    </interactant>
    <organismsDiffer>false</organismsDiffer>
    <experiments>3</experiments>
</comment>
<comment type="interaction">
    <interactant intactId="EBI-10171518">
        <id>A0PJX4</id>
    </interactant>
    <interactant intactId="EBI-12820543">
        <id>O75508</id>
        <label>CLDN11</label>
    </interactant>
    <organismsDiffer>false</organismsDiffer>
    <experiments>3</experiments>
</comment>
<comment type="interaction">
    <interactant intactId="EBI-10171518">
        <id>A0PJX4</id>
    </interactant>
    <interactant intactId="EBI-2807956">
        <id>Q96FZ5</id>
        <label>CMTM7</label>
    </interactant>
    <organismsDiffer>false</organismsDiffer>
    <experiments>3</experiments>
</comment>
<comment type="interaction">
    <interactant intactId="EBI-10171518">
        <id>A0PJX4</id>
    </interactant>
    <interactant intactId="EBI-3932027">
        <id>P21145</id>
        <label>MAL</label>
    </interactant>
    <organismsDiffer>false</organismsDiffer>
    <experiments>3</experiments>
</comment>
<comment type="interaction">
    <interactant intactId="EBI-10171518">
        <id>A0PJX4</id>
    </interactant>
    <interactant intactId="EBI-16439278">
        <id>Q6FHY5</id>
        <label>MEOX2</label>
    </interactant>
    <organismsDiffer>false</organismsDiffer>
    <experiments>3</experiments>
</comment>
<comment type="interaction">
    <interactant intactId="EBI-10171518">
        <id>A0PJX4</id>
    </interactant>
    <interactant intactId="EBI-302345">
        <id>Q8ND90</id>
        <label>PNMA1</label>
    </interactant>
    <organismsDiffer>false</organismsDiffer>
    <experiments>3</experiments>
</comment>
<comment type="interaction">
    <interactant intactId="EBI-10171518">
        <id>A0PJX4</id>
    </interactant>
    <interactant intactId="EBI-348587">
        <id>Q9BVK8</id>
        <label>TMEM147</label>
    </interactant>
    <organismsDiffer>false</organismsDiffer>
    <experiments>3</experiments>
</comment>
<comment type="subcellular location">
    <subcellularLocation>
        <location evidence="1 2">Endoplasmic reticulum membrane</location>
        <topology evidence="2">Single-pass type I membrane protein</topology>
    </subcellularLocation>
</comment>
<comment type="similarity">
    <text evidence="6">Belongs to the shisa family.</text>
</comment>
<protein>
    <recommendedName>
        <fullName>Protein shisa-3 homolog</fullName>
    </recommendedName>
</protein>
<feature type="signal peptide" evidence="3">
    <location>
        <begin position="1"/>
        <end position="21"/>
    </location>
</feature>
<feature type="chain" id="PRO_0000330025" description="Protein shisa-3 homolog">
    <location>
        <begin position="22"/>
        <end position="238"/>
    </location>
</feature>
<feature type="topological domain" description="Lumenal" evidence="6">
    <location>
        <begin position="22"/>
        <end position="98"/>
    </location>
</feature>
<feature type="transmembrane region" description="Helical" evidence="3">
    <location>
        <begin position="99"/>
        <end position="119"/>
    </location>
</feature>
<feature type="topological domain" description="Cytoplasmic" evidence="6">
    <location>
        <begin position="120"/>
        <end position="238"/>
    </location>
</feature>
<feature type="region of interest" description="Disordered" evidence="4">
    <location>
        <begin position="151"/>
        <end position="173"/>
    </location>
</feature>
<feature type="compositionally biased region" description="Low complexity" evidence="4">
    <location>
        <begin position="159"/>
        <end position="173"/>
    </location>
</feature>
<feature type="sequence variant" id="VAR_042687" description="In dbSNP:rs11733156." evidence="5">
    <original>W</original>
    <variation>C</variation>
    <location>
        <position position="13"/>
    </location>
</feature>
<feature type="sequence conflict" description="In Ref. 2; AAH12029." evidence="6" ref="2">
    <original>V</original>
    <variation>G</variation>
    <location>
        <position position="95"/>
    </location>
</feature>
<name>SHSA3_HUMAN</name>
<accession>A0PJX4</accession>
<accession>A0PJX3</accession>
<accession>Q96EQ5</accession>
<reference key="1">
    <citation type="submission" date="2005-07" db="EMBL/GenBank/DDBJ databases">
        <authorList>
            <person name="Mural R.J."/>
            <person name="Istrail S."/>
            <person name="Sutton G.G."/>
            <person name="Florea L."/>
            <person name="Halpern A.L."/>
            <person name="Mobarry C.M."/>
            <person name="Lippert R."/>
            <person name="Walenz B."/>
            <person name="Shatkay H."/>
            <person name="Dew I."/>
            <person name="Miller J.R."/>
            <person name="Flanigan M.J."/>
            <person name="Edwards N.J."/>
            <person name="Bolanos R."/>
            <person name="Fasulo D."/>
            <person name="Halldorsson B.V."/>
            <person name="Hannenhalli S."/>
            <person name="Turner R."/>
            <person name="Yooseph S."/>
            <person name="Lu F."/>
            <person name="Nusskern D.R."/>
            <person name="Shue B.C."/>
            <person name="Zheng X.H."/>
            <person name="Zhong F."/>
            <person name="Delcher A.L."/>
            <person name="Huson D.H."/>
            <person name="Kravitz S.A."/>
            <person name="Mouchard L."/>
            <person name="Reinert K."/>
            <person name="Remington K.A."/>
            <person name="Clark A.G."/>
            <person name="Waterman M.S."/>
            <person name="Eichler E.E."/>
            <person name="Adams M.D."/>
            <person name="Hunkapiller M.W."/>
            <person name="Myers E.W."/>
            <person name="Venter J.C."/>
        </authorList>
    </citation>
    <scope>NUCLEOTIDE SEQUENCE [LARGE SCALE GENOMIC DNA]</scope>
</reference>
<reference key="2">
    <citation type="journal article" date="2004" name="Genome Res.">
        <title>The status, quality, and expansion of the NIH full-length cDNA project: the Mammalian Gene Collection (MGC).</title>
        <authorList>
            <consortium name="The MGC Project Team"/>
        </authorList>
    </citation>
    <scope>NUCLEOTIDE SEQUENCE [LARGE SCALE MRNA]</scope>
    <scope>VARIANT CYS-13</scope>
    <source>
        <tissue>Prostate</tissue>
    </source>
</reference>
<gene>
    <name type="primary">SHISA3</name>
</gene>
<sequence length="238" mass="25832">MRALLALCLLLGWLRWGPAGAQQSGEYCHGWVDVQGNYHEGFQCPEDFDTLDATICCGSCALRYCCAAADARLEQGGCTNDRRELEHPGITAQPVYVPFLIVGSIFIAFIILGSVVAIYCCTCLRPKEPSQQPIRFSLRSYQTETLPMILTSTSPRAPSRQSSTATSSSSTGGSIRRFSFARAEPGCLVPSPPPPYTTSHSIHLAQPSGFLVSPQYFAYPLQQEPPLPGKSCPDFSSS</sequence>
<evidence type="ECO:0000250" key="1"/>
<evidence type="ECO:0000250" key="2">
    <source>
        <dbReference type="UniProtKB" id="Q7T0Z7"/>
    </source>
</evidence>
<evidence type="ECO:0000255" key="3"/>
<evidence type="ECO:0000256" key="4">
    <source>
        <dbReference type="SAM" id="MobiDB-lite"/>
    </source>
</evidence>
<evidence type="ECO:0000269" key="5">
    <source>
    </source>
</evidence>
<evidence type="ECO:0000305" key="6"/>